<keyword id="KW-0472">Membrane</keyword>
<keyword id="KW-1185">Reference proteome</keyword>
<keyword id="KW-0812">Transmembrane</keyword>
<keyword id="KW-1133">Transmembrane helix</keyword>
<gene>
    <name type="primary">orai-1</name>
    <name type="ORF">CBG15255</name>
</gene>
<reference key="1">
    <citation type="journal article" date="2003" name="PLoS Biol.">
        <title>The genome sequence of Caenorhabditis briggsae: a platform for comparative genomics.</title>
        <authorList>
            <person name="Stein L.D."/>
            <person name="Bao Z."/>
            <person name="Blasiar D."/>
            <person name="Blumenthal T."/>
            <person name="Brent M.R."/>
            <person name="Chen N."/>
            <person name="Chinwalla A."/>
            <person name="Clarke L."/>
            <person name="Clee C."/>
            <person name="Coghlan A."/>
            <person name="Coulson A."/>
            <person name="D'Eustachio P."/>
            <person name="Fitch D.H.A."/>
            <person name="Fulton L.A."/>
            <person name="Fulton R.E."/>
            <person name="Griffiths-Jones S."/>
            <person name="Harris T.W."/>
            <person name="Hillier L.W."/>
            <person name="Kamath R."/>
            <person name="Kuwabara P.E."/>
            <person name="Mardis E.R."/>
            <person name="Marra M.A."/>
            <person name="Miner T.L."/>
            <person name="Minx P."/>
            <person name="Mullikin J.C."/>
            <person name="Plumb R.W."/>
            <person name="Rogers J."/>
            <person name="Schein J.E."/>
            <person name="Sohrmann M."/>
            <person name="Spieth J."/>
            <person name="Stajich J.E."/>
            <person name="Wei C."/>
            <person name="Willey D."/>
            <person name="Wilson R.K."/>
            <person name="Durbin R.M."/>
            <person name="Waterston R.H."/>
        </authorList>
    </citation>
    <scope>NUCLEOTIDE SEQUENCE [LARGE SCALE GENOMIC DNA]</scope>
    <source>
        <strain>AF16</strain>
    </source>
</reference>
<organism>
    <name type="scientific">Caenorhabditis briggsae</name>
    <dbReference type="NCBI Taxonomy" id="6238"/>
    <lineage>
        <taxon>Eukaryota</taxon>
        <taxon>Metazoa</taxon>
        <taxon>Ecdysozoa</taxon>
        <taxon>Nematoda</taxon>
        <taxon>Chromadorea</taxon>
        <taxon>Rhabditida</taxon>
        <taxon>Rhabditina</taxon>
        <taxon>Rhabditomorpha</taxon>
        <taxon>Rhabditoidea</taxon>
        <taxon>Rhabditidae</taxon>
        <taxon>Peloderinae</taxon>
        <taxon>Caenorhabditis</taxon>
    </lineage>
</organism>
<evidence type="ECO:0000250" key="1"/>
<evidence type="ECO:0000255" key="2"/>
<evidence type="ECO:0000256" key="3">
    <source>
        <dbReference type="SAM" id="MobiDB-lite"/>
    </source>
</evidence>
<evidence type="ECO:0000305" key="4"/>
<sequence length="300" mass="32800">MPRSHDPSRVELLRQEGSTMNEKRVSISVEDIRGAVATWKTTSGAPITPYPLPQFFLQPPSSGGGSRNVGGGDGAAGNSKNGSMNSLRMQAYAKKTDDDVDLGHRGELDLSEKYNYDLSKAQLKASSRTSALLAGFAMVCLVELQYDDSTSKPLLIVLGVVTSLLVSVHLLALMMSTCILPYMEATGCTQDSPHLKLKFYIDLSWLFSTCIGLLLFLVEIGVIFYVKFTAVGYPTAGYITTAMLIPVGIVFVLFSYLIHKNRVSHSLGRFKDKVDTMKQFLDVEANLQKSTIAPSTIRDI</sequence>
<proteinExistence type="inferred from homology"/>
<name>ORAI_CAEBR</name>
<dbReference type="EMBL" id="HE601055">
    <property type="protein sequence ID" value="CAP33503.1"/>
    <property type="molecule type" value="Genomic_DNA"/>
</dbReference>
<dbReference type="SMR" id="Q616J1"/>
<dbReference type="FunCoup" id="Q616J1">
    <property type="interactions" value="395"/>
</dbReference>
<dbReference type="STRING" id="6238.Q616J1"/>
<dbReference type="EnsemblMetazoa" id="CBG15255c.1">
    <property type="protein sequence ID" value="CBG15255c.1"/>
    <property type="gene ID" value="WBGene00035569"/>
</dbReference>
<dbReference type="KEGG" id="cbr:CBG_15255"/>
<dbReference type="CTD" id="8584964"/>
<dbReference type="WormBase" id="CBG15255a">
    <property type="protein sequence ID" value="CBP39804"/>
    <property type="gene ID" value="WBGene00035569"/>
    <property type="gene designation" value="Cbr-orai-1"/>
</dbReference>
<dbReference type="eggNOG" id="KOG4298">
    <property type="taxonomic scope" value="Eukaryota"/>
</dbReference>
<dbReference type="HOGENOM" id="CLU_940845_0_0_1"/>
<dbReference type="InParanoid" id="Q616J1"/>
<dbReference type="OMA" id="WLIAVEM"/>
<dbReference type="Proteomes" id="UP000008549">
    <property type="component" value="Unassembled WGS sequence"/>
</dbReference>
<dbReference type="GO" id="GO:0016020">
    <property type="term" value="C:membrane"/>
    <property type="evidence" value="ECO:0000318"/>
    <property type="project" value="GO_Central"/>
</dbReference>
<dbReference type="GO" id="GO:0015279">
    <property type="term" value="F:store-operated calcium channel activity"/>
    <property type="evidence" value="ECO:0000318"/>
    <property type="project" value="GO_Central"/>
</dbReference>
<dbReference type="GO" id="GO:0002115">
    <property type="term" value="P:store-operated calcium entry"/>
    <property type="evidence" value="ECO:0000318"/>
    <property type="project" value="GO_Central"/>
</dbReference>
<dbReference type="FunFam" id="1.20.140.140:FF:000003">
    <property type="entry name" value="Protein orai"/>
    <property type="match status" value="1"/>
</dbReference>
<dbReference type="Gene3D" id="1.20.140.140">
    <property type="entry name" value="Calcium release-activated calcium channel protein Orai"/>
    <property type="match status" value="1"/>
</dbReference>
<dbReference type="InterPro" id="IPR012446">
    <property type="entry name" value="CRAC_channel"/>
</dbReference>
<dbReference type="InterPro" id="IPR038350">
    <property type="entry name" value="Orai_sf"/>
</dbReference>
<dbReference type="PANTHER" id="PTHR31501">
    <property type="entry name" value="CALCIUM RELEASE-ACTIVATED CALCIUM CHANNEL PROTEIN 1"/>
    <property type="match status" value="1"/>
</dbReference>
<dbReference type="PANTHER" id="PTHR31501:SF7">
    <property type="entry name" value="CALCIUM RELEASE-ACTIVATED CALCIUM CHANNEL PROTEIN 1"/>
    <property type="match status" value="1"/>
</dbReference>
<dbReference type="Pfam" id="PF07856">
    <property type="entry name" value="Orai-1"/>
    <property type="match status" value="1"/>
</dbReference>
<protein>
    <recommendedName>
        <fullName>Protein orai</fullName>
    </recommendedName>
    <alternativeName>
        <fullName>Store-operated calcium channel</fullName>
    </alternativeName>
</protein>
<accession>Q616J1</accession>
<accession>A8XLJ9</accession>
<comment type="function">
    <text evidence="1">Ca(2+) release-activated Ca(2+)-like (CRAC-like) channel subunit which mediates Ca(2+) influx and increase in Ca(2+)-selective current by synergy with the Ca(2+) sensor, stim-1. Required for Ca(2+) and IP3-dependent contractile activity of sheath cells and the spermatheca. Affects brood size and somatic cell function (By similarity).</text>
</comment>
<comment type="subcellular location">
    <subcellularLocation>
        <location evidence="1">Membrane</location>
        <topology evidence="1">Multi-pass membrane protein</topology>
    </subcellularLocation>
</comment>
<comment type="similarity">
    <text evidence="4">Belongs to the Orai family.</text>
</comment>
<feature type="chain" id="PRO_0000234387" description="Protein orai">
    <location>
        <begin position="1"/>
        <end position="300"/>
    </location>
</feature>
<feature type="topological domain" description="Cytoplasmic" evidence="2">
    <location>
        <begin position="1"/>
        <end position="128"/>
    </location>
</feature>
<feature type="transmembrane region" description="Helical" evidence="2">
    <location>
        <begin position="129"/>
        <end position="146"/>
    </location>
</feature>
<feature type="topological domain" description="Extracellular" evidence="2">
    <location>
        <begin position="147"/>
        <end position="153"/>
    </location>
</feature>
<feature type="transmembrane region" description="Helical" evidence="2">
    <location>
        <begin position="154"/>
        <end position="174"/>
    </location>
</feature>
<feature type="topological domain" description="Cytoplasmic" evidence="2">
    <location>
        <begin position="175"/>
        <end position="205"/>
    </location>
</feature>
<feature type="transmembrane region" description="Helical" evidence="2">
    <location>
        <begin position="206"/>
        <end position="226"/>
    </location>
</feature>
<feature type="topological domain" description="Extracellular" evidence="2">
    <location>
        <begin position="227"/>
        <end position="237"/>
    </location>
</feature>
<feature type="transmembrane region" description="Helical" evidence="2">
    <location>
        <begin position="238"/>
        <end position="258"/>
    </location>
</feature>
<feature type="topological domain" description="Cytoplasmic" evidence="2">
    <location>
        <begin position="259"/>
        <end position="300"/>
    </location>
</feature>
<feature type="region of interest" description="Disordered" evidence="3">
    <location>
        <begin position="58"/>
        <end position="82"/>
    </location>
</feature>
<feature type="compositionally biased region" description="Gly residues" evidence="3">
    <location>
        <begin position="62"/>
        <end position="75"/>
    </location>
</feature>